<name>HIS7_THEFY</name>
<protein>
    <recommendedName>
        <fullName evidence="1">Imidazoleglycerol-phosphate dehydratase</fullName>
        <shortName evidence="1">IGPD</shortName>
        <ecNumber evidence="1">4.2.1.19</ecNumber>
    </recommendedName>
</protein>
<evidence type="ECO:0000255" key="1">
    <source>
        <dbReference type="HAMAP-Rule" id="MF_00076"/>
    </source>
</evidence>
<sequence length="197" mass="21697">MSRIGRVERATNETKVFVEVNLDGTGAADISTGVGFYDHMLHQIAKHGLFDLTVRTEGDLHIDAHHTMEDTALALGAAFREALGDRSGIRRFADAKVPLDEALAEVTVDISGRPYLVHSEPEGMAPMIGRDYDTTMTRHIFESFVAQARITLHVHVPYGRIPHHIVECQFKAVARALRSACERDPRVTGVPSTKGTL</sequence>
<keyword id="KW-0028">Amino-acid biosynthesis</keyword>
<keyword id="KW-0963">Cytoplasm</keyword>
<keyword id="KW-0368">Histidine biosynthesis</keyword>
<keyword id="KW-0456">Lyase</keyword>
<reference key="1">
    <citation type="journal article" date="2007" name="J. Bacteriol.">
        <title>Genome sequence and analysis of the soil cellulolytic actinomycete Thermobifida fusca YX.</title>
        <authorList>
            <person name="Lykidis A."/>
            <person name="Mavromatis K."/>
            <person name="Ivanova N."/>
            <person name="Anderson I."/>
            <person name="Land M."/>
            <person name="DiBartolo G."/>
            <person name="Martinez M."/>
            <person name="Lapidus A."/>
            <person name="Lucas S."/>
            <person name="Copeland A."/>
            <person name="Richardson P."/>
            <person name="Wilson D.B."/>
            <person name="Kyrpides N."/>
        </authorList>
    </citation>
    <scope>NUCLEOTIDE SEQUENCE [LARGE SCALE GENOMIC DNA]</scope>
    <source>
        <strain>YX</strain>
    </source>
</reference>
<organism>
    <name type="scientific">Thermobifida fusca (strain YX)</name>
    <dbReference type="NCBI Taxonomy" id="269800"/>
    <lineage>
        <taxon>Bacteria</taxon>
        <taxon>Bacillati</taxon>
        <taxon>Actinomycetota</taxon>
        <taxon>Actinomycetes</taxon>
        <taxon>Streptosporangiales</taxon>
        <taxon>Nocardiopsidaceae</taxon>
        <taxon>Thermobifida</taxon>
    </lineage>
</organism>
<proteinExistence type="inferred from homology"/>
<comment type="catalytic activity">
    <reaction evidence="1">
        <text>D-erythro-1-(imidazol-4-yl)glycerol 3-phosphate = 3-(imidazol-4-yl)-2-oxopropyl phosphate + H2O</text>
        <dbReference type="Rhea" id="RHEA:11040"/>
        <dbReference type="ChEBI" id="CHEBI:15377"/>
        <dbReference type="ChEBI" id="CHEBI:57766"/>
        <dbReference type="ChEBI" id="CHEBI:58278"/>
        <dbReference type="EC" id="4.2.1.19"/>
    </reaction>
</comment>
<comment type="pathway">
    <text evidence="1">Amino-acid biosynthesis; L-histidine biosynthesis; L-histidine from 5-phospho-alpha-D-ribose 1-diphosphate: step 6/9.</text>
</comment>
<comment type="subcellular location">
    <subcellularLocation>
        <location evidence="1">Cytoplasm</location>
    </subcellularLocation>
</comment>
<comment type="similarity">
    <text evidence="1">Belongs to the imidazoleglycerol-phosphate dehydratase family.</text>
</comment>
<feature type="chain" id="PRO_1000010366" description="Imidazoleglycerol-phosphate dehydratase">
    <location>
        <begin position="1"/>
        <end position="197"/>
    </location>
</feature>
<dbReference type="EC" id="4.2.1.19" evidence="1"/>
<dbReference type="EMBL" id="CP000088">
    <property type="protein sequence ID" value="AAZ55190.1"/>
    <property type="molecule type" value="Genomic_DNA"/>
</dbReference>
<dbReference type="RefSeq" id="WP_011291599.1">
    <property type="nucleotide sequence ID" value="NC_007333.1"/>
</dbReference>
<dbReference type="SMR" id="Q47QS7"/>
<dbReference type="STRING" id="269800.Tfu_1152"/>
<dbReference type="KEGG" id="tfu:Tfu_1152"/>
<dbReference type="eggNOG" id="COG0131">
    <property type="taxonomic scope" value="Bacteria"/>
</dbReference>
<dbReference type="HOGENOM" id="CLU_044308_3_0_11"/>
<dbReference type="OrthoDB" id="9790411at2"/>
<dbReference type="UniPathway" id="UPA00031">
    <property type="reaction ID" value="UER00011"/>
</dbReference>
<dbReference type="GO" id="GO:0005737">
    <property type="term" value="C:cytoplasm"/>
    <property type="evidence" value="ECO:0007669"/>
    <property type="project" value="UniProtKB-SubCell"/>
</dbReference>
<dbReference type="GO" id="GO:0004424">
    <property type="term" value="F:imidazoleglycerol-phosphate dehydratase activity"/>
    <property type="evidence" value="ECO:0007669"/>
    <property type="project" value="UniProtKB-UniRule"/>
</dbReference>
<dbReference type="GO" id="GO:0000105">
    <property type="term" value="P:L-histidine biosynthetic process"/>
    <property type="evidence" value="ECO:0007669"/>
    <property type="project" value="UniProtKB-UniRule"/>
</dbReference>
<dbReference type="CDD" id="cd07914">
    <property type="entry name" value="IGPD"/>
    <property type="match status" value="1"/>
</dbReference>
<dbReference type="FunFam" id="3.30.230.40:FF:000001">
    <property type="entry name" value="Imidazoleglycerol-phosphate dehydratase HisB"/>
    <property type="match status" value="1"/>
</dbReference>
<dbReference type="FunFam" id="3.30.230.40:FF:000003">
    <property type="entry name" value="Imidazoleglycerol-phosphate dehydratase HisB"/>
    <property type="match status" value="1"/>
</dbReference>
<dbReference type="Gene3D" id="3.30.230.40">
    <property type="entry name" value="Imidazole glycerol phosphate dehydratase, domain 1"/>
    <property type="match status" value="2"/>
</dbReference>
<dbReference type="HAMAP" id="MF_00076">
    <property type="entry name" value="HisB"/>
    <property type="match status" value="1"/>
</dbReference>
<dbReference type="InterPro" id="IPR038494">
    <property type="entry name" value="IGPD_sf"/>
</dbReference>
<dbReference type="InterPro" id="IPR000807">
    <property type="entry name" value="ImidazoleglycerolP_deHydtase"/>
</dbReference>
<dbReference type="InterPro" id="IPR020565">
    <property type="entry name" value="ImidazoleglycerP_deHydtase_CS"/>
</dbReference>
<dbReference type="InterPro" id="IPR020568">
    <property type="entry name" value="Ribosomal_Su5_D2-typ_SF"/>
</dbReference>
<dbReference type="NCBIfam" id="NF002110">
    <property type="entry name" value="PRK00951.1-6"/>
    <property type="match status" value="1"/>
</dbReference>
<dbReference type="NCBIfam" id="NF002111">
    <property type="entry name" value="PRK00951.2-1"/>
    <property type="match status" value="1"/>
</dbReference>
<dbReference type="NCBIfam" id="NF002114">
    <property type="entry name" value="PRK00951.2-4"/>
    <property type="match status" value="1"/>
</dbReference>
<dbReference type="PANTHER" id="PTHR23133:SF2">
    <property type="entry name" value="IMIDAZOLEGLYCEROL-PHOSPHATE DEHYDRATASE"/>
    <property type="match status" value="1"/>
</dbReference>
<dbReference type="PANTHER" id="PTHR23133">
    <property type="entry name" value="IMIDAZOLEGLYCEROL-PHOSPHATE DEHYDRATASE HIS7"/>
    <property type="match status" value="1"/>
</dbReference>
<dbReference type="Pfam" id="PF00475">
    <property type="entry name" value="IGPD"/>
    <property type="match status" value="1"/>
</dbReference>
<dbReference type="SUPFAM" id="SSF54211">
    <property type="entry name" value="Ribosomal protein S5 domain 2-like"/>
    <property type="match status" value="2"/>
</dbReference>
<dbReference type="PROSITE" id="PS00954">
    <property type="entry name" value="IGP_DEHYDRATASE_1"/>
    <property type="match status" value="1"/>
</dbReference>
<dbReference type="PROSITE" id="PS00955">
    <property type="entry name" value="IGP_DEHYDRATASE_2"/>
    <property type="match status" value="1"/>
</dbReference>
<gene>
    <name evidence="1" type="primary">hisB</name>
    <name type="ordered locus">Tfu_1152</name>
</gene>
<accession>Q47QS7</accession>